<gene>
    <name evidence="1" type="primary">uvrC</name>
    <name type="ordered locus">A2cp1_2678</name>
</gene>
<evidence type="ECO:0000255" key="1">
    <source>
        <dbReference type="HAMAP-Rule" id="MF_00203"/>
    </source>
</evidence>
<evidence type="ECO:0000256" key="2">
    <source>
        <dbReference type="SAM" id="MobiDB-lite"/>
    </source>
</evidence>
<feature type="chain" id="PRO_1000200563" description="UvrABC system protein C">
    <location>
        <begin position="1"/>
        <end position="707"/>
    </location>
</feature>
<feature type="domain" description="GIY-YIG" evidence="1">
    <location>
        <begin position="14"/>
        <end position="94"/>
    </location>
</feature>
<feature type="domain" description="UVR" evidence="1">
    <location>
        <begin position="206"/>
        <end position="241"/>
    </location>
</feature>
<feature type="region of interest" description="Disordered" evidence="2">
    <location>
        <begin position="655"/>
        <end position="707"/>
    </location>
</feature>
<feature type="compositionally biased region" description="Low complexity" evidence="2">
    <location>
        <begin position="660"/>
        <end position="670"/>
    </location>
</feature>
<feature type="compositionally biased region" description="Low complexity" evidence="2">
    <location>
        <begin position="677"/>
        <end position="689"/>
    </location>
</feature>
<feature type="compositionally biased region" description="Acidic residues" evidence="2">
    <location>
        <begin position="690"/>
        <end position="707"/>
    </location>
</feature>
<sequence length="707" mass="78992">MDANLRRKLDELPAEPGCYLMKDRAGEVVYVGKASSLRSRVRSYFDPGRGDQRAFVALLDELLGDLEVIVTRSEKEAVLLENELIKKHRPRFNVRLRDDKDFIVLKLDERHPYPRLEVRRAREKRQPGARYFGPYSSASSIRETLRMVNRHFQLRTCSDHVFDHRKRPCILYQIHRCPAPCVYEVAAEEYRQSVEDAVEFLEGREGELVERLRGRMAGAAEGLRFEEAARLRDQLQAVERSLEKQRVLMSDRGDRDVIGLYREGPDLVVQVLSMRAGKLQDAQAHPFREQEFPDEEILSSFLSLYYEHTDAPDEILVPLEPVQAEALADVLSERRGRRVRLLTPQRGAKADLLDVARRNAEQGFRAWHEHDERREQALAAVARALHLARPPRWMECYDISTFQGALAVGSGVSMKDGEPDKANYRRYKVKAVAGQDDFAMLHEVITRRLRRALGEGQLPDLIVIDGGKGQLNAALAAAKDLGVPTRPSPGNPDAPFVELVGLAKSRLVDGPSLGTARVVGRRGRRAEARLADAAEAAEKGFVSELARSPERVFLPGRKDPVVLRQNSAELFLLARLRDEAHRFAITFHRKLRRERNFQSVLEEIPGIGEGRKRALLRHFGALRRVREATPEEIAQVEGFGPRQAAAVHAFFHRPDAPPIAADEPSGAPAGAPGGGPAEASPEAVAAATEAEIDAALADEDASPEPAA</sequence>
<dbReference type="EMBL" id="CP001359">
    <property type="protein sequence ID" value="ACL66015.1"/>
    <property type="molecule type" value="Genomic_DNA"/>
</dbReference>
<dbReference type="RefSeq" id="WP_012633790.1">
    <property type="nucleotide sequence ID" value="NC_011891.1"/>
</dbReference>
<dbReference type="SMR" id="B8JDG6"/>
<dbReference type="KEGG" id="acp:A2cp1_2678"/>
<dbReference type="HOGENOM" id="CLU_014841_3_2_7"/>
<dbReference type="Proteomes" id="UP000007089">
    <property type="component" value="Chromosome"/>
</dbReference>
<dbReference type="GO" id="GO:0005737">
    <property type="term" value="C:cytoplasm"/>
    <property type="evidence" value="ECO:0007669"/>
    <property type="project" value="UniProtKB-SubCell"/>
</dbReference>
<dbReference type="GO" id="GO:0009380">
    <property type="term" value="C:excinuclease repair complex"/>
    <property type="evidence" value="ECO:0007669"/>
    <property type="project" value="InterPro"/>
</dbReference>
<dbReference type="GO" id="GO:0003677">
    <property type="term" value="F:DNA binding"/>
    <property type="evidence" value="ECO:0007669"/>
    <property type="project" value="UniProtKB-UniRule"/>
</dbReference>
<dbReference type="GO" id="GO:0009381">
    <property type="term" value="F:excinuclease ABC activity"/>
    <property type="evidence" value="ECO:0007669"/>
    <property type="project" value="UniProtKB-UniRule"/>
</dbReference>
<dbReference type="GO" id="GO:0006289">
    <property type="term" value="P:nucleotide-excision repair"/>
    <property type="evidence" value="ECO:0007669"/>
    <property type="project" value="UniProtKB-UniRule"/>
</dbReference>
<dbReference type="GO" id="GO:0009432">
    <property type="term" value="P:SOS response"/>
    <property type="evidence" value="ECO:0007669"/>
    <property type="project" value="UniProtKB-UniRule"/>
</dbReference>
<dbReference type="CDD" id="cd10434">
    <property type="entry name" value="GIY-YIG_UvrC_Cho"/>
    <property type="match status" value="1"/>
</dbReference>
<dbReference type="FunFam" id="3.40.1440.10:FF:000001">
    <property type="entry name" value="UvrABC system protein C"/>
    <property type="match status" value="1"/>
</dbReference>
<dbReference type="Gene3D" id="1.10.150.20">
    <property type="entry name" value="5' to 3' exonuclease, C-terminal subdomain"/>
    <property type="match status" value="1"/>
</dbReference>
<dbReference type="Gene3D" id="3.40.1440.10">
    <property type="entry name" value="GIY-YIG endonuclease"/>
    <property type="match status" value="1"/>
</dbReference>
<dbReference type="Gene3D" id="4.10.860.10">
    <property type="entry name" value="UVR domain"/>
    <property type="match status" value="1"/>
</dbReference>
<dbReference type="Gene3D" id="3.30.420.340">
    <property type="entry name" value="UvrC, RNAse H endonuclease domain"/>
    <property type="match status" value="1"/>
</dbReference>
<dbReference type="HAMAP" id="MF_00203">
    <property type="entry name" value="UvrC"/>
    <property type="match status" value="1"/>
</dbReference>
<dbReference type="InterPro" id="IPR041663">
    <property type="entry name" value="DisA/LigA_HHH"/>
</dbReference>
<dbReference type="InterPro" id="IPR000305">
    <property type="entry name" value="GIY-YIG_endonuc"/>
</dbReference>
<dbReference type="InterPro" id="IPR035901">
    <property type="entry name" value="GIY-YIG_endonuc_sf"/>
</dbReference>
<dbReference type="InterPro" id="IPR047296">
    <property type="entry name" value="GIY-YIG_UvrC_Cho"/>
</dbReference>
<dbReference type="InterPro" id="IPR003583">
    <property type="entry name" value="Hlx-hairpin-Hlx_DNA-bd_motif"/>
</dbReference>
<dbReference type="InterPro" id="IPR010994">
    <property type="entry name" value="RuvA_2-like"/>
</dbReference>
<dbReference type="InterPro" id="IPR001943">
    <property type="entry name" value="UVR_dom"/>
</dbReference>
<dbReference type="InterPro" id="IPR036876">
    <property type="entry name" value="UVR_dom_sf"/>
</dbReference>
<dbReference type="InterPro" id="IPR050066">
    <property type="entry name" value="UvrABC_protein_C"/>
</dbReference>
<dbReference type="InterPro" id="IPR004791">
    <property type="entry name" value="UvrC"/>
</dbReference>
<dbReference type="InterPro" id="IPR001162">
    <property type="entry name" value="UvrC_RNase_H_dom"/>
</dbReference>
<dbReference type="InterPro" id="IPR038476">
    <property type="entry name" value="UvrC_RNase_H_dom_sf"/>
</dbReference>
<dbReference type="NCBIfam" id="TIGR00194">
    <property type="entry name" value="uvrC"/>
    <property type="match status" value="1"/>
</dbReference>
<dbReference type="PANTHER" id="PTHR30562:SF1">
    <property type="entry name" value="UVRABC SYSTEM PROTEIN C"/>
    <property type="match status" value="1"/>
</dbReference>
<dbReference type="PANTHER" id="PTHR30562">
    <property type="entry name" value="UVRC/OXIDOREDUCTASE"/>
    <property type="match status" value="1"/>
</dbReference>
<dbReference type="Pfam" id="PF01541">
    <property type="entry name" value="GIY-YIG"/>
    <property type="match status" value="1"/>
</dbReference>
<dbReference type="Pfam" id="PF12826">
    <property type="entry name" value="HHH_2"/>
    <property type="match status" value="1"/>
</dbReference>
<dbReference type="Pfam" id="PF02151">
    <property type="entry name" value="UVR"/>
    <property type="match status" value="1"/>
</dbReference>
<dbReference type="Pfam" id="PF22920">
    <property type="entry name" value="UvrC_RNaseH"/>
    <property type="match status" value="1"/>
</dbReference>
<dbReference type="Pfam" id="PF08459">
    <property type="entry name" value="UvrC_RNaseH_dom"/>
    <property type="match status" value="1"/>
</dbReference>
<dbReference type="SMART" id="SM00465">
    <property type="entry name" value="GIYc"/>
    <property type="match status" value="1"/>
</dbReference>
<dbReference type="SMART" id="SM00278">
    <property type="entry name" value="HhH1"/>
    <property type="match status" value="2"/>
</dbReference>
<dbReference type="SUPFAM" id="SSF46600">
    <property type="entry name" value="C-terminal UvrC-binding domain of UvrB"/>
    <property type="match status" value="1"/>
</dbReference>
<dbReference type="SUPFAM" id="SSF82771">
    <property type="entry name" value="GIY-YIG endonuclease"/>
    <property type="match status" value="1"/>
</dbReference>
<dbReference type="SUPFAM" id="SSF47781">
    <property type="entry name" value="RuvA domain 2-like"/>
    <property type="match status" value="1"/>
</dbReference>
<dbReference type="PROSITE" id="PS50164">
    <property type="entry name" value="GIY_YIG"/>
    <property type="match status" value="1"/>
</dbReference>
<dbReference type="PROSITE" id="PS50151">
    <property type="entry name" value="UVR"/>
    <property type="match status" value="1"/>
</dbReference>
<dbReference type="PROSITE" id="PS50165">
    <property type="entry name" value="UVRC"/>
    <property type="match status" value="1"/>
</dbReference>
<accession>B8JDG6</accession>
<reference key="1">
    <citation type="submission" date="2009-01" db="EMBL/GenBank/DDBJ databases">
        <title>Complete sequence of Anaeromyxobacter dehalogenans 2CP-1.</title>
        <authorList>
            <person name="Lucas S."/>
            <person name="Copeland A."/>
            <person name="Lapidus A."/>
            <person name="Glavina del Rio T."/>
            <person name="Dalin E."/>
            <person name="Tice H."/>
            <person name="Bruce D."/>
            <person name="Goodwin L."/>
            <person name="Pitluck S."/>
            <person name="Saunders E."/>
            <person name="Brettin T."/>
            <person name="Detter J.C."/>
            <person name="Han C."/>
            <person name="Larimer F."/>
            <person name="Land M."/>
            <person name="Hauser L."/>
            <person name="Kyrpides N."/>
            <person name="Ovchinnikova G."/>
            <person name="Beliaev A.S."/>
            <person name="Richardson P."/>
        </authorList>
    </citation>
    <scope>NUCLEOTIDE SEQUENCE [LARGE SCALE GENOMIC DNA]</scope>
    <source>
        <strain>2CP-1 / ATCC BAA-258</strain>
    </source>
</reference>
<proteinExistence type="inferred from homology"/>
<protein>
    <recommendedName>
        <fullName evidence="1">UvrABC system protein C</fullName>
        <shortName evidence="1">Protein UvrC</shortName>
    </recommendedName>
    <alternativeName>
        <fullName evidence="1">Excinuclease ABC subunit C</fullName>
    </alternativeName>
</protein>
<organism>
    <name type="scientific">Anaeromyxobacter dehalogenans (strain 2CP-1 / ATCC BAA-258)</name>
    <dbReference type="NCBI Taxonomy" id="455488"/>
    <lineage>
        <taxon>Bacteria</taxon>
        <taxon>Pseudomonadati</taxon>
        <taxon>Myxococcota</taxon>
        <taxon>Myxococcia</taxon>
        <taxon>Myxococcales</taxon>
        <taxon>Cystobacterineae</taxon>
        <taxon>Anaeromyxobacteraceae</taxon>
        <taxon>Anaeromyxobacter</taxon>
    </lineage>
</organism>
<keyword id="KW-0963">Cytoplasm</keyword>
<keyword id="KW-0227">DNA damage</keyword>
<keyword id="KW-0228">DNA excision</keyword>
<keyword id="KW-0234">DNA repair</keyword>
<keyword id="KW-0267">Excision nuclease</keyword>
<keyword id="KW-0742">SOS response</keyword>
<name>UVRC_ANAD2</name>
<comment type="function">
    <text evidence="1">The UvrABC repair system catalyzes the recognition and processing of DNA lesions. UvrC both incises the 5' and 3' sides of the lesion. The N-terminal half is responsible for the 3' incision and the C-terminal half is responsible for the 5' incision.</text>
</comment>
<comment type="subunit">
    <text evidence="1">Interacts with UvrB in an incision complex.</text>
</comment>
<comment type="subcellular location">
    <subcellularLocation>
        <location evidence="1">Cytoplasm</location>
    </subcellularLocation>
</comment>
<comment type="similarity">
    <text evidence="1">Belongs to the UvrC family.</text>
</comment>